<comment type="function">
    <text evidence="1">Catalyzes the transfer of the phosphoenolpyruvate moiety from enoylpyruvoyl-2-diphospho-5'-guanosine (EPPG) to 7,8-didemethyl-8-hydroxy-5-deazariboflavin (FO) with the formation of dehydro coenzyme F420-0 and GMP.</text>
</comment>
<comment type="catalytic activity">
    <reaction evidence="1">
        <text>enolpyruvoyl-2-diphospho-5'-guanosine + 7,8-didemethyl-8-hydroxy-5-deazariboflavin = dehydro coenzyme F420-0 + GMP + H(+)</text>
        <dbReference type="Rhea" id="RHEA:27510"/>
        <dbReference type="ChEBI" id="CHEBI:15378"/>
        <dbReference type="ChEBI" id="CHEBI:58115"/>
        <dbReference type="ChEBI" id="CHEBI:59904"/>
        <dbReference type="ChEBI" id="CHEBI:143701"/>
        <dbReference type="ChEBI" id="CHEBI:143705"/>
        <dbReference type="EC" id="2.7.8.28"/>
    </reaction>
</comment>
<comment type="cofactor">
    <cofactor evidence="1">
        <name>Mg(2+)</name>
        <dbReference type="ChEBI" id="CHEBI:18420"/>
    </cofactor>
</comment>
<comment type="pathway">
    <text evidence="1">Cofactor biosynthesis; coenzyme F420 biosynthesis.</text>
</comment>
<comment type="subunit">
    <text evidence="1">Homodimer.</text>
</comment>
<comment type="similarity">
    <text evidence="1">Belongs to the CofD family.</text>
</comment>
<comment type="sequence caution" evidence="2">
    <conflict type="erroneous initiation">
        <sequence resource="EMBL-CDS" id="BAD59472"/>
    </conflict>
</comment>
<proteinExistence type="inferred from homology"/>
<keyword id="KW-0460">Magnesium</keyword>
<keyword id="KW-1185">Reference proteome</keyword>
<keyword id="KW-0808">Transferase</keyword>
<evidence type="ECO:0000255" key="1">
    <source>
        <dbReference type="HAMAP-Rule" id="MF_01257"/>
    </source>
</evidence>
<evidence type="ECO:0000305" key="2"/>
<gene>
    <name evidence="1" type="primary">fbiA</name>
    <name type="ordered locus">NFA_46210</name>
</gene>
<organism>
    <name type="scientific">Nocardia farcinica (strain IFM 10152)</name>
    <dbReference type="NCBI Taxonomy" id="247156"/>
    <lineage>
        <taxon>Bacteria</taxon>
        <taxon>Bacillati</taxon>
        <taxon>Actinomycetota</taxon>
        <taxon>Actinomycetes</taxon>
        <taxon>Mycobacteriales</taxon>
        <taxon>Nocardiaceae</taxon>
        <taxon>Nocardia</taxon>
    </lineage>
</organism>
<reference key="1">
    <citation type="journal article" date="2004" name="Proc. Natl. Acad. Sci. U.S.A.">
        <title>The complete genomic sequence of Nocardia farcinica IFM 10152.</title>
        <authorList>
            <person name="Ishikawa J."/>
            <person name="Yamashita A."/>
            <person name="Mikami Y."/>
            <person name="Hoshino Y."/>
            <person name="Kurita H."/>
            <person name="Hotta K."/>
            <person name="Shiba T."/>
            <person name="Hattori M."/>
        </authorList>
    </citation>
    <scope>NUCLEOTIDE SEQUENCE [LARGE SCALE GENOMIC DNA]</scope>
    <source>
        <strain>IFM 10152</strain>
    </source>
</reference>
<feature type="chain" id="PRO_0000145764" description="Phosphoenolpyruvate transferase">
    <location>
        <begin position="1"/>
        <end position="332"/>
    </location>
</feature>
<feature type="binding site" evidence="1">
    <location>
        <position position="63"/>
    </location>
    <ligand>
        <name>7,8-didemethyl-8-hydroxy-5-deazariboflavin</name>
        <dbReference type="ChEBI" id="CHEBI:59904"/>
    </ligand>
</feature>
<name>FBIA_NOCFA</name>
<protein>
    <recommendedName>
        <fullName evidence="1">Phosphoenolpyruvate transferase</fullName>
        <ecNumber evidence="1">2.7.8.28</ecNumber>
    </recommendedName>
    <alternativeName>
        <fullName evidence="1">EPPG:FO PEP transferase</fullName>
    </alternativeName>
</protein>
<sequence length="332" mass="35572">MTGQHADIAPATGPRIVVLVGGVGGARFLQGVRELLPDAEVSAIVNVGDDVWMHGLRICPDLDTCMYTLGGGIDTERGWGRVGETWHAKEELAAYHAKPDWFGLGDRDLATHLIRTEMLRAGYPLSAVTEALCNRWQPGVKLIPATDDRCETHVVVTDPENPGERRAIHFQEWWVRYRANVETHGFATIGADEAKPAPNVIDLIESADAVLLAPSNPVVSIGAILAVPGIRGALRTTRAKVIGVSGVIDGKPLRGMADECLSVIGVETTAEAVGRHYGARSATGILDGWLIHTTDTAEVPGVEVRSVPLLMTDPPTTAEIVREALDLAGVKW</sequence>
<accession>Q5YQR9</accession>
<dbReference type="EC" id="2.7.8.28" evidence="1"/>
<dbReference type="EMBL" id="AP006618">
    <property type="protein sequence ID" value="BAD59472.1"/>
    <property type="status" value="ALT_INIT"/>
    <property type="molecule type" value="Genomic_DNA"/>
</dbReference>
<dbReference type="SMR" id="Q5YQR9"/>
<dbReference type="STRING" id="247156.NFA_46210"/>
<dbReference type="KEGG" id="nfa:NFA_46210"/>
<dbReference type="eggNOG" id="COG0391">
    <property type="taxonomic scope" value="Bacteria"/>
</dbReference>
<dbReference type="HOGENOM" id="CLU_055795_0_0_11"/>
<dbReference type="UniPathway" id="UPA00071"/>
<dbReference type="Proteomes" id="UP000006820">
    <property type="component" value="Chromosome"/>
</dbReference>
<dbReference type="GO" id="GO:0043743">
    <property type="term" value="F:LPPG:FO 2-phospho-L-lactate transferase activity"/>
    <property type="evidence" value="ECO:0007669"/>
    <property type="project" value="UniProtKB-EC"/>
</dbReference>
<dbReference type="GO" id="GO:0000287">
    <property type="term" value="F:magnesium ion binding"/>
    <property type="evidence" value="ECO:0007669"/>
    <property type="project" value="InterPro"/>
</dbReference>
<dbReference type="GO" id="GO:0052645">
    <property type="term" value="P:F420-0 metabolic process"/>
    <property type="evidence" value="ECO:0007669"/>
    <property type="project" value="UniProtKB-UniRule"/>
</dbReference>
<dbReference type="CDD" id="cd07186">
    <property type="entry name" value="CofD_like"/>
    <property type="match status" value="1"/>
</dbReference>
<dbReference type="FunFam" id="1.10.8.240:FF:000001">
    <property type="entry name" value="2-phospho-L-lactate transferase"/>
    <property type="match status" value="1"/>
</dbReference>
<dbReference type="Gene3D" id="1.10.8.240">
    <property type="entry name" value="CofD-like domain"/>
    <property type="match status" value="1"/>
</dbReference>
<dbReference type="Gene3D" id="3.40.50.10680">
    <property type="entry name" value="CofD-like domains"/>
    <property type="match status" value="1"/>
</dbReference>
<dbReference type="HAMAP" id="MF_01257">
    <property type="entry name" value="CofD"/>
    <property type="match status" value="1"/>
</dbReference>
<dbReference type="InterPro" id="IPR002882">
    <property type="entry name" value="CofD"/>
</dbReference>
<dbReference type="InterPro" id="IPR038136">
    <property type="entry name" value="CofD-like_dom_sf"/>
</dbReference>
<dbReference type="InterPro" id="IPR010115">
    <property type="entry name" value="FbiA/CofD"/>
</dbReference>
<dbReference type="NCBIfam" id="TIGR01819">
    <property type="entry name" value="F420_cofD"/>
    <property type="match status" value="1"/>
</dbReference>
<dbReference type="PANTHER" id="PTHR43007">
    <property type="entry name" value="2-PHOSPHO-L-LACTATE TRANSFERASE"/>
    <property type="match status" value="1"/>
</dbReference>
<dbReference type="PANTHER" id="PTHR43007:SF1">
    <property type="entry name" value="2-PHOSPHO-L-LACTATE TRANSFERASE"/>
    <property type="match status" value="1"/>
</dbReference>
<dbReference type="Pfam" id="PF01933">
    <property type="entry name" value="CofD"/>
    <property type="match status" value="1"/>
</dbReference>
<dbReference type="SUPFAM" id="SSF142338">
    <property type="entry name" value="CofD-like"/>
    <property type="match status" value="1"/>
</dbReference>